<name>AROA_ECOSM</name>
<reference key="1">
    <citation type="journal article" date="2008" name="J. Bacteriol.">
        <title>Insights into the environmental resistance gene pool from the genome sequence of the multidrug-resistant environmental isolate Escherichia coli SMS-3-5.</title>
        <authorList>
            <person name="Fricke W.F."/>
            <person name="Wright M.S."/>
            <person name="Lindell A.H."/>
            <person name="Harkins D.M."/>
            <person name="Baker-Austin C."/>
            <person name="Ravel J."/>
            <person name="Stepanauskas R."/>
        </authorList>
    </citation>
    <scope>NUCLEOTIDE SEQUENCE [LARGE SCALE GENOMIC DNA]</scope>
    <source>
        <strain>SMS-3-5 / SECEC</strain>
    </source>
</reference>
<evidence type="ECO:0000255" key="1">
    <source>
        <dbReference type="HAMAP-Rule" id="MF_00210"/>
    </source>
</evidence>
<accession>B1LJV6</accession>
<dbReference type="EC" id="2.5.1.19" evidence="1"/>
<dbReference type="EMBL" id="CP000970">
    <property type="protein sequence ID" value="ACB19813.1"/>
    <property type="molecule type" value="Genomic_DNA"/>
</dbReference>
<dbReference type="RefSeq" id="WP_000445250.1">
    <property type="nucleotide sequence ID" value="NC_010498.1"/>
</dbReference>
<dbReference type="BMRB" id="B1LJV6"/>
<dbReference type="SMR" id="B1LJV6"/>
<dbReference type="KEGG" id="ecm:EcSMS35_2213"/>
<dbReference type="HOGENOM" id="CLU_024321_0_0_6"/>
<dbReference type="UniPathway" id="UPA00053">
    <property type="reaction ID" value="UER00089"/>
</dbReference>
<dbReference type="Proteomes" id="UP000007011">
    <property type="component" value="Chromosome"/>
</dbReference>
<dbReference type="GO" id="GO:0005737">
    <property type="term" value="C:cytoplasm"/>
    <property type="evidence" value="ECO:0007669"/>
    <property type="project" value="UniProtKB-SubCell"/>
</dbReference>
<dbReference type="GO" id="GO:0003866">
    <property type="term" value="F:3-phosphoshikimate 1-carboxyvinyltransferase activity"/>
    <property type="evidence" value="ECO:0007669"/>
    <property type="project" value="UniProtKB-UniRule"/>
</dbReference>
<dbReference type="GO" id="GO:0008652">
    <property type="term" value="P:amino acid biosynthetic process"/>
    <property type="evidence" value="ECO:0007669"/>
    <property type="project" value="UniProtKB-KW"/>
</dbReference>
<dbReference type="GO" id="GO:0009073">
    <property type="term" value="P:aromatic amino acid family biosynthetic process"/>
    <property type="evidence" value="ECO:0007669"/>
    <property type="project" value="UniProtKB-KW"/>
</dbReference>
<dbReference type="GO" id="GO:0009423">
    <property type="term" value="P:chorismate biosynthetic process"/>
    <property type="evidence" value="ECO:0007669"/>
    <property type="project" value="UniProtKB-UniRule"/>
</dbReference>
<dbReference type="CDD" id="cd01554">
    <property type="entry name" value="EPT-like"/>
    <property type="match status" value="1"/>
</dbReference>
<dbReference type="FunFam" id="3.65.10.10:FF:000003">
    <property type="entry name" value="3-phosphoshikimate 1-carboxyvinyltransferase"/>
    <property type="match status" value="1"/>
</dbReference>
<dbReference type="FunFam" id="3.65.10.10:FF:000004">
    <property type="entry name" value="3-phosphoshikimate 1-carboxyvinyltransferase"/>
    <property type="match status" value="1"/>
</dbReference>
<dbReference type="Gene3D" id="3.65.10.10">
    <property type="entry name" value="Enolpyruvate transferase domain"/>
    <property type="match status" value="2"/>
</dbReference>
<dbReference type="HAMAP" id="MF_00210">
    <property type="entry name" value="EPSP_synth"/>
    <property type="match status" value="1"/>
</dbReference>
<dbReference type="InterPro" id="IPR001986">
    <property type="entry name" value="Enolpyruvate_Tfrase_dom"/>
</dbReference>
<dbReference type="InterPro" id="IPR036968">
    <property type="entry name" value="Enolpyruvate_Tfrase_sf"/>
</dbReference>
<dbReference type="InterPro" id="IPR006264">
    <property type="entry name" value="EPSP_synthase"/>
</dbReference>
<dbReference type="InterPro" id="IPR023193">
    <property type="entry name" value="EPSP_synthase_CS"/>
</dbReference>
<dbReference type="InterPro" id="IPR013792">
    <property type="entry name" value="RNA3'P_cycl/enolpyr_Trfase_a/b"/>
</dbReference>
<dbReference type="NCBIfam" id="TIGR01356">
    <property type="entry name" value="aroA"/>
    <property type="match status" value="1"/>
</dbReference>
<dbReference type="PANTHER" id="PTHR21090">
    <property type="entry name" value="AROM/DEHYDROQUINATE SYNTHASE"/>
    <property type="match status" value="1"/>
</dbReference>
<dbReference type="PANTHER" id="PTHR21090:SF5">
    <property type="entry name" value="PENTAFUNCTIONAL AROM POLYPEPTIDE"/>
    <property type="match status" value="1"/>
</dbReference>
<dbReference type="Pfam" id="PF00275">
    <property type="entry name" value="EPSP_synthase"/>
    <property type="match status" value="1"/>
</dbReference>
<dbReference type="PIRSF" id="PIRSF000505">
    <property type="entry name" value="EPSPS"/>
    <property type="match status" value="1"/>
</dbReference>
<dbReference type="SUPFAM" id="SSF55205">
    <property type="entry name" value="EPT/RTPC-like"/>
    <property type="match status" value="1"/>
</dbReference>
<dbReference type="PROSITE" id="PS00104">
    <property type="entry name" value="EPSP_SYNTHASE_1"/>
    <property type="match status" value="1"/>
</dbReference>
<dbReference type="PROSITE" id="PS00885">
    <property type="entry name" value="EPSP_SYNTHASE_2"/>
    <property type="match status" value="1"/>
</dbReference>
<comment type="function">
    <text evidence="1">Catalyzes the transfer of the enolpyruvyl moiety of phosphoenolpyruvate (PEP) to the 5-hydroxyl of shikimate-3-phosphate (S3P) to produce enolpyruvyl shikimate-3-phosphate and inorganic phosphate.</text>
</comment>
<comment type="catalytic activity">
    <reaction evidence="1">
        <text>3-phosphoshikimate + phosphoenolpyruvate = 5-O-(1-carboxyvinyl)-3-phosphoshikimate + phosphate</text>
        <dbReference type="Rhea" id="RHEA:21256"/>
        <dbReference type="ChEBI" id="CHEBI:43474"/>
        <dbReference type="ChEBI" id="CHEBI:57701"/>
        <dbReference type="ChEBI" id="CHEBI:58702"/>
        <dbReference type="ChEBI" id="CHEBI:145989"/>
        <dbReference type="EC" id="2.5.1.19"/>
    </reaction>
    <physiologicalReaction direction="left-to-right" evidence="1">
        <dbReference type="Rhea" id="RHEA:21257"/>
    </physiologicalReaction>
</comment>
<comment type="pathway">
    <text evidence="1">Metabolic intermediate biosynthesis; chorismate biosynthesis; chorismate from D-erythrose 4-phosphate and phosphoenolpyruvate: step 6/7.</text>
</comment>
<comment type="subunit">
    <text evidence="1">Monomer.</text>
</comment>
<comment type="subcellular location">
    <subcellularLocation>
        <location evidence="1">Cytoplasm</location>
    </subcellularLocation>
</comment>
<comment type="similarity">
    <text evidence="1">Belongs to the EPSP synthase family.</text>
</comment>
<feature type="chain" id="PRO_1000189563" description="3-phosphoshikimate 1-carboxyvinyltransferase">
    <location>
        <begin position="1"/>
        <end position="427"/>
    </location>
</feature>
<feature type="active site" description="Proton acceptor" evidence="1">
    <location>
        <position position="313"/>
    </location>
</feature>
<feature type="binding site" evidence="1">
    <location>
        <position position="22"/>
    </location>
    <ligand>
        <name>3-phosphoshikimate</name>
        <dbReference type="ChEBI" id="CHEBI:145989"/>
    </ligand>
</feature>
<feature type="binding site" evidence="1">
    <location>
        <position position="22"/>
    </location>
    <ligand>
        <name>phosphoenolpyruvate</name>
        <dbReference type="ChEBI" id="CHEBI:58702"/>
    </ligand>
</feature>
<feature type="binding site" evidence="1">
    <location>
        <position position="23"/>
    </location>
    <ligand>
        <name>3-phosphoshikimate</name>
        <dbReference type="ChEBI" id="CHEBI:145989"/>
    </ligand>
</feature>
<feature type="binding site" evidence="1">
    <location>
        <position position="27"/>
    </location>
    <ligand>
        <name>3-phosphoshikimate</name>
        <dbReference type="ChEBI" id="CHEBI:145989"/>
    </ligand>
</feature>
<feature type="binding site" evidence="1">
    <location>
        <position position="96"/>
    </location>
    <ligand>
        <name>phosphoenolpyruvate</name>
        <dbReference type="ChEBI" id="CHEBI:58702"/>
    </ligand>
</feature>
<feature type="binding site" evidence="1">
    <location>
        <position position="124"/>
    </location>
    <ligand>
        <name>phosphoenolpyruvate</name>
        <dbReference type="ChEBI" id="CHEBI:58702"/>
    </ligand>
</feature>
<feature type="binding site" evidence="1">
    <location>
        <position position="169"/>
    </location>
    <ligand>
        <name>3-phosphoshikimate</name>
        <dbReference type="ChEBI" id="CHEBI:145989"/>
    </ligand>
</feature>
<feature type="binding site" evidence="1">
    <location>
        <position position="170"/>
    </location>
    <ligand>
        <name>3-phosphoshikimate</name>
        <dbReference type="ChEBI" id="CHEBI:145989"/>
    </ligand>
</feature>
<feature type="binding site" evidence="1">
    <location>
        <position position="171"/>
    </location>
    <ligand>
        <name>3-phosphoshikimate</name>
        <dbReference type="ChEBI" id="CHEBI:145989"/>
    </ligand>
</feature>
<feature type="binding site" evidence="1">
    <location>
        <position position="171"/>
    </location>
    <ligand>
        <name>phosphoenolpyruvate</name>
        <dbReference type="ChEBI" id="CHEBI:58702"/>
    </ligand>
</feature>
<feature type="binding site" evidence="1">
    <location>
        <position position="197"/>
    </location>
    <ligand>
        <name>3-phosphoshikimate</name>
        <dbReference type="ChEBI" id="CHEBI:145989"/>
    </ligand>
</feature>
<feature type="binding site" evidence="1">
    <location>
        <position position="313"/>
    </location>
    <ligand>
        <name>3-phosphoshikimate</name>
        <dbReference type="ChEBI" id="CHEBI:145989"/>
    </ligand>
</feature>
<feature type="binding site" evidence="1">
    <location>
        <position position="336"/>
    </location>
    <ligand>
        <name>3-phosphoshikimate</name>
        <dbReference type="ChEBI" id="CHEBI:145989"/>
    </ligand>
</feature>
<feature type="binding site" evidence="1">
    <location>
        <position position="340"/>
    </location>
    <ligand>
        <name>3-phosphoshikimate</name>
        <dbReference type="ChEBI" id="CHEBI:145989"/>
    </ligand>
</feature>
<feature type="binding site" evidence="1">
    <location>
        <position position="344"/>
    </location>
    <ligand>
        <name>phosphoenolpyruvate</name>
        <dbReference type="ChEBI" id="CHEBI:58702"/>
    </ligand>
</feature>
<feature type="binding site" evidence="1">
    <location>
        <position position="386"/>
    </location>
    <ligand>
        <name>phosphoenolpyruvate</name>
        <dbReference type="ChEBI" id="CHEBI:58702"/>
    </ligand>
</feature>
<feature type="binding site" evidence="1">
    <location>
        <position position="411"/>
    </location>
    <ligand>
        <name>phosphoenolpyruvate</name>
        <dbReference type="ChEBI" id="CHEBI:58702"/>
    </ligand>
</feature>
<proteinExistence type="inferred from homology"/>
<keyword id="KW-0028">Amino-acid biosynthesis</keyword>
<keyword id="KW-0057">Aromatic amino acid biosynthesis</keyword>
<keyword id="KW-0963">Cytoplasm</keyword>
<keyword id="KW-0808">Transferase</keyword>
<gene>
    <name evidence="1" type="primary">aroA</name>
    <name type="ordered locus">EcSMS35_2213</name>
</gene>
<protein>
    <recommendedName>
        <fullName evidence="1">3-phosphoshikimate 1-carboxyvinyltransferase</fullName>
        <ecNumber evidence="1">2.5.1.19</ecNumber>
    </recommendedName>
    <alternativeName>
        <fullName evidence="1">5-enolpyruvylshikimate-3-phosphate synthase</fullName>
        <shortName evidence="1">EPSP synthase</shortName>
        <shortName evidence="1">EPSPS</shortName>
    </alternativeName>
</protein>
<organism>
    <name type="scientific">Escherichia coli (strain SMS-3-5 / SECEC)</name>
    <dbReference type="NCBI Taxonomy" id="439855"/>
    <lineage>
        <taxon>Bacteria</taxon>
        <taxon>Pseudomonadati</taxon>
        <taxon>Pseudomonadota</taxon>
        <taxon>Gammaproteobacteria</taxon>
        <taxon>Enterobacterales</taxon>
        <taxon>Enterobacteriaceae</taxon>
        <taxon>Escherichia</taxon>
    </lineage>
</organism>
<sequence length="427" mass="46163">MESLTLQPIARVDGTINLPGSKSVSNRALLLAALAHGKTVLTNLLDSDDVRYMLNALKALGVSYTLSADRTRCEIIGNGGPLHAKSALELFLGNAGTAMRPLAAALCLGSNDIVLTGEPRMKERPIGHLVDALRLGGAKITYLEQENYPPLRLQGGFTGGNVDVDGSVSSQFLTALLMTAPLAPEDTVIRIKGDLVSKPYIDITLNLMKTFGVEIENQHYQQFVVKGGQSYQSPGTYLVEGDASSASYFLAAAAIKGGTVKVTGIGRNSMQGDIRFADVLEKMGATICWGDDYISCTRGELNAIDMDMNHIPDAAMTIATAALFAKGNTTLRNIYNWRVKETDRLFAMATELRKVGAEVEEGHDFIRITPPEKLKFAEIATYNDHRMAMCFSLVALSDTAVTILDPKCTAKTFPDYFEQLARISQAA</sequence>